<protein>
    <recommendedName>
        <fullName evidence="1">Heat-inducible transcription repressor HrcA</fullName>
    </recommendedName>
</protein>
<gene>
    <name evidence="1" type="primary">hrcA</name>
    <name type="ordered locus">Bcep1808_0706</name>
</gene>
<proteinExistence type="inferred from homology"/>
<evidence type="ECO:0000255" key="1">
    <source>
        <dbReference type="HAMAP-Rule" id="MF_00081"/>
    </source>
</evidence>
<keyword id="KW-0678">Repressor</keyword>
<keyword id="KW-0346">Stress response</keyword>
<keyword id="KW-0804">Transcription</keyword>
<keyword id="KW-0805">Transcription regulation</keyword>
<reference key="1">
    <citation type="submission" date="2007-03" db="EMBL/GenBank/DDBJ databases">
        <title>Complete sequence of chromosome 1 of Burkholderia vietnamiensis G4.</title>
        <authorList>
            <consortium name="US DOE Joint Genome Institute"/>
            <person name="Copeland A."/>
            <person name="Lucas S."/>
            <person name="Lapidus A."/>
            <person name="Barry K."/>
            <person name="Detter J.C."/>
            <person name="Glavina del Rio T."/>
            <person name="Hammon N."/>
            <person name="Israni S."/>
            <person name="Dalin E."/>
            <person name="Tice H."/>
            <person name="Pitluck S."/>
            <person name="Chain P."/>
            <person name="Malfatti S."/>
            <person name="Shin M."/>
            <person name="Vergez L."/>
            <person name="Schmutz J."/>
            <person name="Larimer F."/>
            <person name="Land M."/>
            <person name="Hauser L."/>
            <person name="Kyrpides N."/>
            <person name="Tiedje J."/>
            <person name="Richardson P."/>
        </authorList>
    </citation>
    <scope>NUCLEOTIDE SEQUENCE [LARGE SCALE GENOMIC DNA]</scope>
    <source>
        <strain>G4 / LMG 22486</strain>
    </source>
</reference>
<sequence>MLDPRARTLLKTLIERYIADGQPVGSRTLSRYSGLELSPATIRNVMSDLEELGLVSSPHTSAGRVPTPRGYRLFVDTMLTVEAPIDAEAVARQVQNTLQAGEPQQRVVAAAASVLSNLSQFAGVVLTPRRSHVFKQIEFMRLSDKRILLIIVTPEGDVQNRMLATPRDYTPSQLTEASNYINAHFAGLSFDEVRRRLRDEIDQLRGDMTTLMHAAVTASTEVPDTEDTVLISGERNLLEVADLSSDMARLRKLFDVFDQKTGLLQLLDVSSHAQGVQIFIGGESTLVPIEEMSVVTAPYEVNGKIVGTLGVIGPTRMAYNRVIPIVDITARLLSLALSQQ</sequence>
<comment type="function">
    <text evidence="1">Negative regulator of class I heat shock genes (grpE-dnaK-dnaJ and groELS operons). Prevents heat-shock induction of these operons.</text>
</comment>
<comment type="similarity">
    <text evidence="1">Belongs to the HrcA family.</text>
</comment>
<feature type="chain" id="PRO_1000010390" description="Heat-inducible transcription repressor HrcA">
    <location>
        <begin position="1"/>
        <end position="340"/>
    </location>
</feature>
<dbReference type="EMBL" id="CP000614">
    <property type="protein sequence ID" value="ABO53718.1"/>
    <property type="molecule type" value="Genomic_DNA"/>
</dbReference>
<dbReference type="SMR" id="A4JBR5"/>
<dbReference type="KEGG" id="bvi:Bcep1808_0706"/>
<dbReference type="eggNOG" id="COG1420">
    <property type="taxonomic scope" value="Bacteria"/>
</dbReference>
<dbReference type="HOGENOM" id="CLU_050019_0_0_4"/>
<dbReference type="Proteomes" id="UP000002287">
    <property type="component" value="Chromosome 1"/>
</dbReference>
<dbReference type="GO" id="GO:0003677">
    <property type="term" value="F:DNA binding"/>
    <property type="evidence" value="ECO:0007669"/>
    <property type="project" value="InterPro"/>
</dbReference>
<dbReference type="GO" id="GO:0045892">
    <property type="term" value="P:negative regulation of DNA-templated transcription"/>
    <property type="evidence" value="ECO:0007669"/>
    <property type="project" value="UniProtKB-UniRule"/>
</dbReference>
<dbReference type="Gene3D" id="3.30.450.40">
    <property type="match status" value="1"/>
</dbReference>
<dbReference type="Gene3D" id="3.30.390.60">
    <property type="entry name" value="Heat-inducible transcription repressor hrca homolog, domain 3"/>
    <property type="match status" value="1"/>
</dbReference>
<dbReference type="Gene3D" id="1.10.10.10">
    <property type="entry name" value="Winged helix-like DNA-binding domain superfamily/Winged helix DNA-binding domain"/>
    <property type="match status" value="1"/>
</dbReference>
<dbReference type="HAMAP" id="MF_00081">
    <property type="entry name" value="HrcA"/>
    <property type="match status" value="1"/>
</dbReference>
<dbReference type="InterPro" id="IPR029016">
    <property type="entry name" value="GAF-like_dom_sf"/>
</dbReference>
<dbReference type="InterPro" id="IPR002571">
    <property type="entry name" value="HrcA"/>
</dbReference>
<dbReference type="InterPro" id="IPR021153">
    <property type="entry name" value="HrcA_C"/>
</dbReference>
<dbReference type="InterPro" id="IPR036388">
    <property type="entry name" value="WH-like_DNA-bd_sf"/>
</dbReference>
<dbReference type="InterPro" id="IPR036390">
    <property type="entry name" value="WH_DNA-bd_sf"/>
</dbReference>
<dbReference type="InterPro" id="IPR005104">
    <property type="entry name" value="WHTH_HrcA_DNA-bd"/>
</dbReference>
<dbReference type="InterPro" id="IPR023120">
    <property type="entry name" value="WHTH_transcript_rep_HrcA_IDD"/>
</dbReference>
<dbReference type="NCBIfam" id="TIGR00331">
    <property type="entry name" value="hrcA"/>
    <property type="match status" value="1"/>
</dbReference>
<dbReference type="PANTHER" id="PTHR34824">
    <property type="entry name" value="HEAT-INDUCIBLE TRANSCRIPTION REPRESSOR HRCA"/>
    <property type="match status" value="1"/>
</dbReference>
<dbReference type="PANTHER" id="PTHR34824:SF1">
    <property type="entry name" value="HEAT-INDUCIBLE TRANSCRIPTION REPRESSOR HRCA"/>
    <property type="match status" value="1"/>
</dbReference>
<dbReference type="Pfam" id="PF01628">
    <property type="entry name" value="HrcA"/>
    <property type="match status" value="1"/>
</dbReference>
<dbReference type="Pfam" id="PF03444">
    <property type="entry name" value="HrcA_DNA-bdg"/>
    <property type="match status" value="1"/>
</dbReference>
<dbReference type="PIRSF" id="PIRSF005485">
    <property type="entry name" value="HrcA"/>
    <property type="match status" value="1"/>
</dbReference>
<dbReference type="SUPFAM" id="SSF55781">
    <property type="entry name" value="GAF domain-like"/>
    <property type="match status" value="1"/>
</dbReference>
<dbReference type="SUPFAM" id="SSF46785">
    <property type="entry name" value="Winged helix' DNA-binding domain"/>
    <property type="match status" value="1"/>
</dbReference>
<accession>A4JBR5</accession>
<name>HRCA_BURVG</name>
<organism>
    <name type="scientific">Burkholderia vietnamiensis (strain G4 / LMG 22486)</name>
    <name type="common">Burkholderia cepacia (strain R1808)</name>
    <dbReference type="NCBI Taxonomy" id="269482"/>
    <lineage>
        <taxon>Bacteria</taxon>
        <taxon>Pseudomonadati</taxon>
        <taxon>Pseudomonadota</taxon>
        <taxon>Betaproteobacteria</taxon>
        <taxon>Burkholderiales</taxon>
        <taxon>Burkholderiaceae</taxon>
        <taxon>Burkholderia</taxon>
        <taxon>Burkholderia cepacia complex</taxon>
    </lineage>
</organism>